<reference key="1">
    <citation type="journal article" date="1993" name="EMBO J.">
        <title>The methyl-accepting transducer protein HtrI is functionally associated with the photoreceptor sensory rhodopsin I in the archaeon Halobacterium salinarium.</title>
        <authorList>
            <person name="Ferrando-May E."/>
            <person name="Krah M."/>
            <person name="Marwan W."/>
            <person name="Oesterhelt D."/>
        </authorList>
    </citation>
    <scope>NUCLEOTIDE SEQUENCE [GENOMIC DNA]</scope>
    <source>
        <strain>R1 / S9 / L33</strain>
    </source>
</reference>
<reference key="2">
    <citation type="journal article" date="2008" name="Genomics">
        <title>Evolution in the laboratory: the genome of Halobacterium salinarum strain R1 compared to that of strain NRC-1.</title>
        <authorList>
            <person name="Pfeiffer F."/>
            <person name="Schuster S.C."/>
            <person name="Broicher A."/>
            <person name="Falb M."/>
            <person name="Palm P."/>
            <person name="Rodewald K."/>
            <person name="Ruepp A."/>
            <person name="Soppa J."/>
            <person name="Tittor J."/>
            <person name="Oesterhelt D."/>
        </authorList>
    </citation>
    <scope>NUCLEOTIDE SEQUENCE [LARGE SCALE GENOMIC DNA]</scope>
    <source>
        <strain>ATCC 29341 / DSM 671 / R1</strain>
    </source>
</reference>
<reference key="3">
    <citation type="journal article" date="1994" name="EMBO J.">
        <title>Phototaxis of Halobacterium salinarium requires a signalling complex of sensory rhodopsin I and its methyl-accepting transducer HtrI.</title>
        <authorList>
            <person name="Krah M."/>
            <person name="Marwan W."/>
            <person name="Vermeglio A."/>
            <person name="Oesterhelt D."/>
        </authorList>
    </citation>
    <scope>FUNCTION</scope>
</reference>
<reference key="4">
    <citation type="journal article" date="2008" name="J. Mol. Biol.">
        <title>Physiological sites of deamidation and methyl esterification in sensory transducers of Halobacterium salinarum.</title>
        <authorList>
            <person name="Koch M.K."/>
            <person name="Staudinger W.F."/>
            <person name="Siedler F."/>
            <person name="Oesterhelt D."/>
        </authorList>
    </citation>
    <scope>METHYLATION</scope>
    <source>
        <strain>R1 / S9</strain>
    </source>
</reference>
<comment type="function">
    <text evidence="7">Transduces signals from the phototaxis receptor sensory rhodopsin I (SR-I) to the flagellar motor. Responds to light changes through the variation of the level of methylation.</text>
</comment>
<comment type="subcellular location">
    <subcellularLocation>
        <location evidence="8">Cell membrane</location>
        <topology evidence="8">Multi-pass membrane protein</topology>
    </subcellularLocation>
</comment>
<comment type="PTM">
    <text evidence="6">Methylated by CheR.</text>
</comment>
<comment type="similarity">
    <text evidence="8">Belongs to the methyl-accepting chemotaxis (MCP) protein family.</text>
</comment>
<proteinExistence type="evidence at protein level"/>
<feature type="initiator methionine" description="Removed" evidence="1">
    <location>
        <position position="1"/>
    </location>
</feature>
<feature type="chain" id="PRO_0000429075" description="Sensory rhodopsin I transducer">
    <location>
        <begin position="2"/>
        <end position="536"/>
    </location>
</feature>
<feature type="topological domain" description="Cytoplasmic" evidence="2">
    <location>
        <begin position="2"/>
        <end position="14"/>
    </location>
</feature>
<feature type="transmembrane region" description="Helical" evidence="2">
    <location>
        <begin position="15"/>
        <end position="29"/>
    </location>
</feature>
<feature type="topological domain" description="Extracellular" evidence="2">
    <location>
        <begin position="30"/>
        <end position="39"/>
    </location>
</feature>
<feature type="transmembrane region" description="Helical" evidence="2">
    <location>
        <begin position="40"/>
        <end position="55"/>
    </location>
</feature>
<feature type="topological domain" description="Cytoplasmic" evidence="2">
    <location>
        <begin position="56"/>
        <end position="536"/>
    </location>
</feature>
<feature type="domain" description="HAMP 1" evidence="3">
    <location>
        <begin position="55"/>
        <end position="107"/>
    </location>
</feature>
<feature type="domain" description="HAMP 2" evidence="3">
    <location>
        <begin position="149"/>
        <end position="202"/>
    </location>
</feature>
<feature type="domain" description="Methyl-accepting transducer" evidence="4">
    <location>
        <begin position="221"/>
        <end position="459"/>
    </location>
</feature>
<feature type="region of interest" description="Disordered" evidence="5">
    <location>
        <begin position="116"/>
        <end position="145"/>
    </location>
</feature>
<feature type="region of interest" description="Disordered" evidence="5">
    <location>
        <begin position="278"/>
        <end position="307"/>
    </location>
</feature>
<feature type="region of interest" description="Disordered" evidence="5">
    <location>
        <begin position="512"/>
        <end position="536"/>
    </location>
</feature>
<feature type="compositionally biased region" description="Basic and acidic residues" evidence="5">
    <location>
        <begin position="124"/>
        <end position="145"/>
    </location>
</feature>
<feature type="compositionally biased region" description="Basic and acidic residues" evidence="5">
    <location>
        <begin position="287"/>
        <end position="296"/>
    </location>
</feature>
<feature type="modified residue" description="Glutamate methyl ester (Glu)" evidence="1">
    <location>
        <position position="266"/>
    </location>
</feature>
<feature type="modified residue" description="Glutamate methyl ester (Glu)" evidence="1">
    <location>
        <position position="473"/>
    </location>
</feature>
<feature type="sequence conflict" description="In Ref. 1; CAA48578." evidence="8" ref="1">
    <original>D</original>
    <variation>E</variation>
    <location>
        <position position="34"/>
    </location>
</feature>
<feature type="sequence conflict" description="In Ref. 1; CAA48578." evidence="8" ref="1">
    <original>A</original>
    <variation>G</variation>
    <location>
        <position position="55"/>
    </location>
</feature>
<feature type="sequence conflict" description="In Ref. 1; CAA48578." evidence="8" ref="1">
    <original>AS</original>
    <variation>GR</variation>
    <location>
        <begin position="59"/>
        <end position="60"/>
    </location>
</feature>
<feature type="sequence conflict" description="In Ref. 1; CAA48578." evidence="8" ref="1">
    <original>A</original>
    <variation>G</variation>
    <location>
        <position position="65"/>
    </location>
</feature>
<feature type="sequence conflict" description="In Ref. 1; CAA48578." evidence="8" ref="1">
    <original>A</original>
    <variation>S</variation>
    <location>
        <position position="114"/>
    </location>
</feature>
<feature type="sequence conflict" description="In Ref. 1; CAA48578." evidence="8" ref="1">
    <original>AEAETA</original>
    <variation>TESETT</variation>
    <location>
        <begin position="121"/>
        <end position="126"/>
    </location>
</feature>
<feature type="sequence conflict" description="In Ref. 1; CAA48578." evidence="8" ref="1">
    <original>A</original>
    <variation>S</variation>
    <location>
        <position position="130"/>
    </location>
</feature>
<feature type="sequence conflict" description="In Ref. 1; CAA48578." evidence="8" ref="1">
    <original>A</original>
    <variation>S</variation>
    <location>
        <position position="139"/>
    </location>
</feature>
<feature type="sequence conflict" description="In Ref. 1; CAA48578." evidence="8" ref="1">
    <original>TAKRY</original>
    <variation>SSNRD</variation>
    <location>
        <begin position="154"/>
        <end position="158"/>
    </location>
</feature>
<feature type="sequence conflict" description="In Ref. 1; CAA48578." evidence="8" ref="1">
    <original>AA</original>
    <variation>SS</variation>
    <location>
        <begin position="164"/>
        <end position="165"/>
    </location>
</feature>
<feature type="sequence conflict" description="In Ref. 1; CAA48578." evidence="8" ref="1">
    <original>L</original>
    <variation>F</variation>
    <location>
        <position position="170"/>
    </location>
</feature>
<feature type="sequence conflict" description="In Ref. 1; CAA48578." evidence="8" ref="1">
    <original>H</original>
    <variation>P</variation>
    <location>
        <position position="180"/>
    </location>
</feature>
<feature type="sequence conflict" description="In Ref. 1; CAA48578." evidence="8" ref="1">
    <original>V</original>
    <variation>F</variation>
    <location>
        <position position="186"/>
    </location>
</feature>
<feature type="sequence conflict" description="In Ref. 1; CAA48578." evidence="8" ref="1">
    <original>A</original>
    <variation>P</variation>
    <location>
        <position position="243"/>
    </location>
</feature>
<feature type="sequence conflict" description="In Ref. 1; CAA48578." evidence="8" ref="1">
    <original>A</original>
    <variation>P</variation>
    <location>
        <position position="309"/>
    </location>
</feature>
<feature type="sequence conflict" description="In Ref. 1; CAA48578." evidence="8" ref="1">
    <original>Q</original>
    <variation>H</variation>
    <location>
        <position position="315"/>
    </location>
</feature>
<feature type="sequence conflict" description="In Ref. 1; CAA48578." evidence="8" ref="1">
    <original>Q</original>
    <variation>H</variation>
    <location>
        <position position="401"/>
    </location>
</feature>
<feature type="sequence conflict" description="In Ref. 1; CAA48578." evidence="8" ref="1">
    <original>RD</original>
    <variation>LH</variation>
    <location>
        <begin position="418"/>
        <end position="419"/>
    </location>
</feature>
<feature type="sequence conflict" description="In Ref. 1; CAA48578." evidence="8" ref="1">
    <original>A</original>
    <variation>S</variation>
    <location>
        <position position="428"/>
    </location>
</feature>
<feature type="sequence conflict" description="In Ref. 1; CAA48578." evidence="8" ref="1">
    <original>A</original>
    <variation>P</variation>
    <location>
        <position position="475"/>
    </location>
</feature>
<dbReference type="EMBL" id="X68591">
    <property type="protein sequence ID" value="CAA48578.1"/>
    <property type="molecule type" value="Genomic_DNA"/>
</dbReference>
<dbReference type="EMBL" id="AM774415">
    <property type="protein sequence ID" value="CAP14201.1"/>
    <property type="molecule type" value="Genomic_DNA"/>
</dbReference>
<dbReference type="PIR" id="A47190">
    <property type="entry name" value="A47190"/>
</dbReference>
<dbReference type="RefSeq" id="WP_010903210.1">
    <property type="nucleotide sequence ID" value="NC_010364.1"/>
</dbReference>
<dbReference type="SMR" id="B0R632"/>
<dbReference type="EnsemblBacteria" id="CAP14201">
    <property type="protein sequence ID" value="CAP14201"/>
    <property type="gene ID" value="OE_3347F"/>
</dbReference>
<dbReference type="GeneID" id="68694326"/>
<dbReference type="KEGG" id="hsl:OE_3347F"/>
<dbReference type="HOGENOM" id="CLU_000445_107_18_2"/>
<dbReference type="PhylomeDB" id="B0R632"/>
<dbReference type="Proteomes" id="UP000001321">
    <property type="component" value="Chromosome"/>
</dbReference>
<dbReference type="GO" id="GO:0005886">
    <property type="term" value="C:plasma membrane"/>
    <property type="evidence" value="ECO:0007669"/>
    <property type="project" value="UniProtKB-SubCell"/>
</dbReference>
<dbReference type="GO" id="GO:0009881">
    <property type="term" value="F:photoreceptor activity"/>
    <property type="evidence" value="ECO:0007669"/>
    <property type="project" value="UniProtKB-KW"/>
</dbReference>
<dbReference type="GO" id="GO:0004888">
    <property type="term" value="F:transmembrane signaling receptor activity"/>
    <property type="evidence" value="ECO:0007669"/>
    <property type="project" value="InterPro"/>
</dbReference>
<dbReference type="GO" id="GO:0006935">
    <property type="term" value="P:chemotaxis"/>
    <property type="evidence" value="ECO:0007669"/>
    <property type="project" value="InterPro"/>
</dbReference>
<dbReference type="GO" id="GO:0007165">
    <property type="term" value="P:signal transduction"/>
    <property type="evidence" value="ECO:0007669"/>
    <property type="project" value="UniProtKB-KW"/>
</dbReference>
<dbReference type="CDD" id="cd06225">
    <property type="entry name" value="HAMP"/>
    <property type="match status" value="2"/>
</dbReference>
<dbReference type="CDD" id="cd11386">
    <property type="entry name" value="MCP_signal"/>
    <property type="match status" value="1"/>
</dbReference>
<dbReference type="Gene3D" id="6.10.250.1910">
    <property type="match status" value="1"/>
</dbReference>
<dbReference type="Gene3D" id="1.10.287.950">
    <property type="entry name" value="Methyl-accepting chemotaxis protein"/>
    <property type="match status" value="1"/>
</dbReference>
<dbReference type="InterPro" id="IPR004090">
    <property type="entry name" value="Chemotax_Me-accpt_rcpt"/>
</dbReference>
<dbReference type="InterPro" id="IPR003660">
    <property type="entry name" value="HAMP_dom"/>
</dbReference>
<dbReference type="InterPro" id="IPR004089">
    <property type="entry name" value="MCPsignal_dom"/>
</dbReference>
<dbReference type="PANTHER" id="PTHR32089:SF112">
    <property type="entry name" value="LYSOZYME-LIKE PROTEIN-RELATED"/>
    <property type="match status" value="1"/>
</dbReference>
<dbReference type="PANTHER" id="PTHR32089">
    <property type="entry name" value="METHYL-ACCEPTING CHEMOTAXIS PROTEIN MCPB"/>
    <property type="match status" value="1"/>
</dbReference>
<dbReference type="Pfam" id="PF00672">
    <property type="entry name" value="HAMP"/>
    <property type="match status" value="2"/>
</dbReference>
<dbReference type="Pfam" id="PF00015">
    <property type="entry name" value="MCPsignal"/>
    <property type="match status" value="1"/>
</dbReference>
<dbReference type="PRINTS" id="PR00260">
    <property type="entry name" value="CHEMTRNSDUCR"/>
</dbReference>
<dbReference type="SMART" id="SM00304">
    <property type="entry name" value="HAMP"/>
    <property type="match status" value="3"/>
</dbReference>
<dbReference type="SMART" id="SM00283">
    <property type="entry name" value="MA"/>
    <property type="match status" value="1"/>
</dbReference>
<dbReference type="SUPFAM" id="SSF158472">
    <property type="entry name" value="HAMP domain-like"/>
    <property type="match status" value="1"/>
</dbReference>
<dbReference type="SUPFAM" id="SSF58104">
    <property type="entry name" value="Methyl-accepting chemotaxis protein (MCP) signaling domain"/>
    <property type="match status" value="1"/>
</dbReference>
<dbReference type="PROSITE" id="PS50111">
    <property type="entry name" value="CHEMOTAXIS_TRANSDUC_2"/>
    <property type="match status" value="1"/>
</dbReference>
<dbReference type="PROSITE" id="PS50885">
    <property type="entry name" value="HAMP"/>
    <property type="match status" value="2"/>
</dbReference>
<accession>B0R632</accession>
<accession>P33741</accession>
<accession>P33955</accession>
<accession>Q9HPF6</accession>
<evidence type="ECO:0000250" key="1"/>
<evidence type="ECO:0000255" key="2"/>
<evidence type="ECO:0000255" key="3">
    <source>
        <dbReference type="PROSITE-ProRule" id="PRU00102"/>
    </source>
</evidence>
<evidence type="ECO:0000255" key="4">
    <source>
        <dbReference type="PROSITE-ProRule" id="PRU00284"/>
    </source>
</evidence>
<evidence type="ECO:0000256" key="5">
    <source>
        <dbReference type="SAM" id="MobiDB-lite"/>
    </source>
</evidence>
<evidence type="ECO:0000269" key="6">
    <source>
    </source>
</evidence>
<evidence type="ECO:0000269" key="7">
    <source>
    </source>
</evidence>
<evidence type="ECO:0000305" key="8"/>
<protein>
    <recommendedName>
        <fullName>Sensory rhodopsin I transducer</fullName>
    </recommendedName>
    <alternativeName>
        <fullName>HTR-I</fullName>
    </alternativeName>
    <alternativeName>
        <fullName>Methyl-accepting phototaxis protein I</fullName>
        <shortName>MPP-I</shortName>
    </alternativeName>
</protein>
<gene>
    <name type="primary">htr1</name>
    <name type="synonym">htr</name>
    <name type="synonym">htrI</name>
    <name type="ordered locus">OE_3347F</name>
</gene>
<organism>
    <name type="scientific">Halobacterium salinarum (strain ATCC 29341 / DSM 671 / R1)</name>
    <dbReference type="NCBI Taxonomy" id="478009"/>
    <lineage>
        <taxon>Archaea</taxon>
        <taxon>Methanobacteriati</taxon>
        <taxon>Methanobacteriota</taxon>
        <taxon>Stenosarchaea group</taxon>
        <taxon>Halobacteria</taxon>
        <taxon>Halobacteriales</taxon>
        <taxon>Halobacteriaceae</taxon>
        <taxon>Halobacterium</taxon>
        <taxon>Halobacterium salinarum NRC-34001</taxon>
    </lineage>
</organism>
<keyword id="KW-1003">Cell membrane</keyword>
<keyword id="KW-0157">Chromophore</keyword>
<keyword id="KW-0472">Membrane</keyword>
<keyword id="KW-0488">Methylation</keyword>
<keyword id="KW-0600">Photoreceptor protein</keyword>
<keyword id="KW-0675">Receptor</keyword>
<keyword id="KW-0677">Repeat</keyword>
<keyword id="KW-0716">Sensory transduction</keyword>
<keyword id="KW-0807">Transducer</keyword>
<keyword id="KW-0812">Transmembrane</keyword>
<keyword id="KW-1133">Transmembrane helix</keyword>
<name>HTR1_HALS3</name>
<sequence length="536" mass="56675">MTIAWARRRYGVKLGLGYIATAGLLVGVGVTTNDVPSTIVAGIAGLLTLGSINAAETVASIKEIAAQTERVANGNLEQEVTSTRTDEFGSLADSIEQMRQSLRGRLNEMERTRADLEETQAEAETAREEAEQAKQEAQAAEREARELAATYQDTAKRYGETMEAAATGDLTQRVDVDTDHEAMETVGTAFNQMMDDLQATVRTVTTVADEIEAKTERMSETSADIEASAGDTVEAVSKIESQANDQRTELDSAADDVQQVSASAEEIAATIDDLASRSEDVATASDAARDSSKSALDEMSSIETEVDDAVGQVEQLRDQVAEITDIVDVITDIGEQTNMLALNASIEAARAGGNADGDGFSVVADEVKDLAEETQDRANEIAAVVEKVTAQTEDVTASIQQTRTRVESGSETVESTLRDIRTIADSIAEVSNSIDEIQRTTSEQAETVQSTATSVERVAGLSDDTTALASDAESAVIGQRESAEEIAASLEQFQNTAVEQLQSRVASFTVATEDSETAGGSVEQPVMRAGADGGGA</sequence>